<feature type="chain" id="PRO_0000367846" description="THAP domain-containing protein 1 B">
    <location>
        <begin position="1"/>
        <end position="225"/>
    </location>
</feature>
<feature type="zinc finger region" description="THAP-type" evidence="3">
    <location>
        <begin position="5"/>
        <end position="57"/>
    </location>
</feature>
<feature type="coiled-coil region" evidence="2">
    <location>
        <begin position="139"/>
        <end position="194"/>
    </location>
</feature>
<dbReference type="EMBL" id="BC077429">
    <property type="protein sequence ID" value="AAH77429.1"/>
    <property type="molecule type" value="mRNA"/>
</dbReference>
<dbReference type="RefSeq" id="NP_001086777.1">
    <property type="nucleotide sequence ID" value="NM_001093308.1"/>
</dbReference>
<dbReference type="SMR" id="Q6DDT6"/>
<dbReference type="DNASU" id="446612"/>
<dbReference type="GeneID" id="446612"/>
<dbReference type="KEGG" id="xla:446612"/>
<dbReference type="AGR" id="Xenbase:XB-GENE-17330728"/>
<dbReference type="CTD" id="446612"/>
<dbReference type="OrthoDB" id="9867479at2759"/>
<dbReference type="Proteomes" id="UP000186698">
    <property type="component" value="Chromosome 1S"/>
</dbReference>
<dbReference type="Bgee" id="446612">
    <property type="expression patterns" value="Expressed in gastrula and 19 other cell types or tissues"/>
</dbReference>
<dbReference type="GO" id="GO:0005654">
    <property type="term" value="C:nucleoplasm"/>
    <property type="evidence" value="ECO:0007669"/>
    <property type="project" value="UniProtKB-SubCell"/>
</dbReference>
<dbReference type="GO" id="GO:0005634">
    <property type="term" value="C:nucleus"/>
    <property type="evidence" value="ECO:0000318"/>
    <property type="project" value="GO_Central"/>
</dbReference>
<dbReference type="GO" id="GO:0003700">
    <property type="term" value="F:DNA-binding transcription factor activity"/>
    <property type="evidence" value="ECO:0000318"/>
    <property type="project" value="GO_Central"/>
</dbReference>
<dbReference type="GO" id="GO:0000978">
    <property type="term" value="F:RNA polymerase II cis-regulatory region sequence-specific DNA binding"/>
    <property type="evidence" value="ECO:0000318"/>
    <property type="project" value="GO_Central"/>
</dbReference>
<dbReference type="GO" id="GO:0043565">
    <property type="term" value="F:sequence-specific DNA binding"/>
    <property type="evidence" value="ECO:0000250"/>
    <property type="project" value="UniProtKB"/>
</dbReference>
<dbReference type="GO" id="GO:0008270">
    <property type="term" value="F:zinc ion binding"/>
    <property type="evidence" value="ECO:0007669"/>
    <property type="project" value="UniProtKB-KW"/>
</dbReference>
<dbReference type="GO" id="GO:0006357">
    <property type="term" value="P:regulation of transcription by RNA polymerase II"/>
    <property type="evidence" value="ECO:0000318"/>
    <property type="project" value="GO_Central"/>
</dbReference>
<dbReference type="Gene3D" id="6.20.210.20">
    <property type="entry name" value="THAP domain"/>
    <property type="match status" value="1"/>
</dbReference>
<dbReference type="InterPro" id="IPR026516">
    <property type="entry name" value="THAP1/10"/>
</dbReference>
<dbReference type="InterPro" id="IPR006612">
    <property type="entry name" value="THAP_Znf"/>
</dbReference>
<dbReference type="InterPro" id="IPR038441">
    <property type="entry name" value="THAP_Znf_sf"/>
</dbReference>
<dbReference type="PANTHER" id="PTHR46600">
    <property type="entry name" value="THAP DOMAIN-CONTAINING"/>
    <property type="match status" value="1"/>
</dbReference>
<dbReference type="PANTHER" id="PTHR46600:SF1">
    <property type="entry name" value="THAP DOMAIN-CONTAINING PROTEIN 1"/>
    <property type="match status" value="1"/>
</dbReference>
<dbReference type="Pfam" id="PF05485">
    <property type="entry name" value="THAP"/>
    <property type="match status" value="1"/>
</dbReference>
<dbReference type="SMART" id="SM00692">
    <property type="entry name" value="DM3"/>
    <property type="match status" value="1"/>
</dbReference>
<dbReference type="SMART" id="SM00980">
    <property type="entry name" value="THAP"/>
    <property type="match status" value="1"/>
</dbReference>
<dbReference type="SUPFAM" id="SSF57716">
    <property type="entry name" value="Glucocorticoid receptor-like (DNA-binding domain)"/>
    <property type="match status" value="1"/>
</dbReference>
<dbReference type="PROSITE" id="PS50950">
    <property type="entry name" value="ZF_THAP"/>
    <property type="match status" value="1"/>
</dbReference>
<organism>
    <name type="scientific">Xenopus laevis</name>
    <name type="common">African clawed frog</name>
    <dbReference type="NCBI Taxonomy" id="8355"/>
    <lineage>
        <taxon>Eukaryota</taxon>
        <taxon>Metazoa</taxon>
        <taxon>Chordata</taxon>
        <taxon>Craniata</taxon>
        <taxon>Vertebrata</taxon>
        <taxon>Euteleostomi</taxon>
        <taxon>Amphibia</taxon>
        <taxon>Batrachia</taxon>
        <taxon>Anura</taxon>
        <taxon>Pipoidea</taxon>
        <taxon>Pipidae</taxon>
        <taxon>Xenopodinae</taxon>
        <taxon>Xenopus</taxon>
        <taxon>Xenopus</taxon>
    </lineage>
</organism>
<name>THP1B_XENLA</name>
<gene>
    <name type="primary">thap1-b</name>
</gene>
<reference key="1">
    <citation type="submission" date="2004-07" db="EMBL/GenBank/DDBJ databases">
        <authorList>
            <consortium name="NIH - Xenopus Gene Collection (XGC) project"/>
        </authorList>
    </citation>
    <scope>NUCLEOTIDE SEQUENCE [LARGE SCALE MRNA]</scope>
    <source>
        <tissue>Embryo</tissue>
    </source>
</reference>
<evidence type="ECO:0000250" key="1"/>
<evidence type="ECO:0000255" key="2"/>
<evidence type="ECO:0000255" key="3">
    <source>
        <dbReference type="PROSITE-ProRule" id="PRU00309"/>
    </source>
</evidence>
<evidence type="ECO:0000305" key="4"/>
<keyword id="KW-0131">Cell cycle</keyword>
<keyword id="KW-0175">Coiled coil</keyword>
<keyword id="KW-0238">DNA-binding</keyword>
<keyword id="KW-0479">Metal-binding</keyword>
<keyword id="KW-0539">Nucleus</keyword>
<keyword id="KW-1185">Reference proteome</keyword>
<keyword id="KW-0804">Transcription</keyword>
<keyword id="KW-0805">Transcription regulation</keyword>
<keyword id="KW-0862">Zinc</keyword>
<keyword id="KW-0863">Zinc-finger</keyword>
<accession>Q6DDT6</accession>
<sequence length="225" mass="26146">MVQSCSAYGCKNRYDKDRPISFHKFPLKRPLLCKKWEAAVRRADFKPTKYSSICSDHFTADCFKRECNNKLLKDNAVPTVFALAEIKKKMGKAVKKEQLPAELEPVPAVPEVDPAIGLLLPPLYTPSHIAVICDHNYTVEDTVHQRRRIQQLEEQVDKLRKKLKIANQKCRRQERSLEKLEKEVSEYREAKGSGYVIFPGNYYEVLNENEYKELTPEITYKEIIL</sequence>
<proteinExistence type="evidence at transcript level"/>
<comment type="function">
    <text evidence="1">DNA-binding transcription regulator that regulates endothelial cell proliferation and G1/S cell-cycle progression. Specifically binds the 5'-[AT]NTNN[GT]GGCA[AGT]-3' core DNA sequence and acts by modulating expression of pRB-E2F cell-cycle target genes (By similarity).</text>
</comment>
<comment type="subcellular location">
    <subcellularLocation>
        <location evidence="1">Nucleus</location>
        <location evidence="1">Nucleoplasm</location>
    </subcellularLocation>
</comment>
<comment type="similarity">
    <text evidence="4">Belongs to the THAP1 family.</text>
</comment>
<protein>
    <recommendedName>
        <fullName>THAP domain-containing protein 1 B</fullName>
    </recommendedName>
</protein>